<name>MINC_PSEA8</name>
<proteinExistence type="inferred from homology"/>
<sequence length="263" mass="28124">MSQADLLDQDPVFQLKGSMLAVTILELAHNDLARLERQLADKVAQAPNFFRDTPLVMALDKLPEGEGRLDLPALLEVCRRHGLRTLAIRAGREEDIAAAQALDLPVLPPSGARERPLDIKDSAPRKPAEEPSPSAGEARPEPAKAEEKPAEPVSRPTKVVKTPVRGGMQIYAAGGDLIVLAAVSPGAELLADGNIHVYGPMRGRALAGVKGDATARIFCQQLAAELVSIAGNYKVAEDLRRSPQWGKAVHVSLSGDVLNITRL</sequence>
<organism>
    <name type="scientific">Pseudomonas aeruginosa (strain LESB58)</name>
    <dbReference type="NCBI Taxonomy" id="557722"/>
    <lineage>
        <taxon>Bacteria</taxon>
        <taxon>Pseudomonadati</taxon>
        <taxon>Pseudomonadota</taxon>
        <taxon>Gammaproteobacteria</taxon>
        <taxon>Pseudomonadales</taxon>
        <taxon>Pseudomonadaceae</taxon>
        <taxon>Pseudomonas</taxon>
    </lineage>
</organism>
<comment type="function">
    <text evidence="1">Cell division inhibitor that blocks the formation of polar Z ring septums. Rapidly oscillates between the poles of the cell to destabilize FtsZ filaments that have formed before they mature into polar Z rings. Prevents FtsZ polymerization.</text>
</comment>
<comment type="subunit">
    <text evidence="1">Interacts with MinD and FtsZ.</text>
</comment>
<comment type="similarity">
    <text evidence="1">Belongs to the MinC family.</text>
</comment>
<accession>B7V7X6</accession>
<evidence type="ECO:0000255" key="1">
    <source>
        <dbReference type="HAMAP-Rule" id="MF_00267"/>
    </source>
</evidence>
<evidence type="ECO:0000256" key="2">
    <source>
        <dbReference type="SAM" id="MobiDB-lite"/>
    </source>
</evidence>
<protein>
    <recommendedName>
        <fullName evidence="1">Probable septum site-determining protein MinC</fullName>
    </recommendedName>
</protein>
<dbReference type="EMBL" id="FM209186">
    <property type="protein sequence ID" value="CAW26552.1"/>
    <property type="molecule type" value="Genomic_DNA"/>
</dbReference>
<dbReference type="RefSeq" id="WP_003114802.1">
    <property type="nucleotide sequence ID" value="NC_011770.1"/>
</dbReference>
<dbReference type="SMR" id="B7V7X6"/>
<dbReference type="KEGG" id="pag:PLES_18241"/>
<dbReference type="HOGENOM" id="CLU_067812_0_1_6"/>
<dbReference type="GO" id="GO:0000902">
    <property type="term" value="P:cell morphogenesis"/>
    <property type="evidence" value="ECO:0007669"/>
    <property type="project" value="InterPro"/>
</dbReference>
<dbReference type="GO" id="GO:0000917">
    <property type="term" value="P:division septum assembly"/>
    <property type="evidence" value="ECO:0007669"/>
    <property type="project" value="UniProtKB-KW"/>
</dbReference>
<dbReference type="GO" id="GO:0051302">
    <property type="term" value="P:regulation of cell division"/>
    <property type="evidence" value="ECO:0007669"/>
    <property type="project" value="InterPro"/>
</dbReference>
<dbReference type="GO" id="GO:1901891">
    <property type="term" value="P:regulation of cell septum assembly"/>
    <property type="evidence" value="ECO:0007669"/>
    <property type="project" value="InterPro"/>
</dbReference>
<dbReference type="Gene3D" id="2.160.20.70">
    <property type="match status" value="1"/>
</dbReference>
<dbReference type="Gene3D" id="3.30.70.260">
    <property type="match status" value="1"/>
</dbReference>
<dbReference type="HAMAP" id="MF_00267">
    <property type="entry name" value="MinC"/>
    <property type="match status" value="1"/>
</dbReference>
<dbReference type="InterPro" id="IPR016098">
    <property type="entry name" value="CAP/MinC_C"/>
</dbReference>
<dbReference type="InterPro" id="IPR013033">
    <property type="entry name" value="MinC"/>
</dbReference>
<dbReference type="InterPro" id="IPR036145">
    <property type="entry name" value="MinC_C_sf"/>
</dbReference>
<dbReference type="InterPro" id="IPR007874">
    <property type="entry name" value="MinC_N"/>
</dbReference>
<dbReference type="InterPro" id="IPR005526">
    <property type="entry name" value="Septum_form_inhib_MinC_C"/>
</dbReference>
<dbReference type="NCBIfam" id="TIGR01222">
    <property type="entry name" value="minC"/>
    <property type="match status" value="1"/>
</dbReference>
<dbReference type="PANTHER" id="PTHR34108">
    <property type="entry name" value="SEPTUM SITE-DETERMINING PROTEIN MINC"/>
    <property type="match status" value="1"/>
</dbReference>
<dbReference type="PANTHER" id="PTHR34108:SF1">
    <property type="entry name" value="SEPTUM SITE-DETERMINING PROTEIN MINC"/>
    <property type="match status" value="1"/>
</dbReference>
<dbReference type="Pfam" id="PF03775">
    <property type="entry name" value="MinC_C"/>
    <property type="match status" value="1"/>
</dbReference>
<dbReference type="Pfam" id="PF05209">
    <property type="entry name" value="MinC_N"/>
    <property type="match status" value="1"/>
</dbReference>
<dbReference type="SUPFAM" id="SSF63848">
    <property type="entry name" value="Cell-division inhibitor MinC, C-terminal domain"/>
    <property type="match status" value="1"/>
</dbReference>
<reference key="1">
    <citation type="journal article" date="2009" name="Genome Res.">
        <title>Newly introduced genomic prophage islands are critical determinants of in vivo competitiveness in the Liverpool epidemic strain of Pseudomonas aeruginosa.</title>
        <authorList>
            <person name="Winstanley C."/>
            <person name="Langille M.G.I."/>
            <person name="Fothergill J.L."/>
            <person name="Kukavica-Ibrulj I."/>
            <person name="Paradis-Bleau C."/>
            <person name="Sanschagrin F."/>
            <person name="Thomson N.R."/>
            <person name="Winsor G.L."/>
            <person name="Quail M.A."/>
            <person name="Lennard N."/>
            <person name="Bignell A."/>
            <person name="Clarke L."/>
            <person name="Seeger K."/>
            <person name="Saunders D."/>
            <person name="Harris D."/>
            <person name="Parkhill J."/>
            <person name="Hancock R.E.W."/>
            <person name="Brinkman F.S.L."/>
            <person name="Levesque R.C."/>
        </authorList>
    </citation>
    <scope>NUCLEOTIDE SEQUENCE [LARGE SCALE GENOMIC DNA]</scope>
    <source>
        <strain>LESB58</strain>
    </source>
</reference>
<feature type="chain" id="PRO_1000191254" description="Probable septum site-determining protein MinC">
    <location>
        <begin position="1"/>
        <end position="263"/>
    </location>
</feature>
<feature type="region of interest" description="Disordered" evidence="2">
    <location>
        <begin position="107"/>
        <end position="159"/>
    </location>
</feature>
<feature type="compositionally biased region" description="Basic and acidic residues" evidence="2">
    <location>
        <begin position="112"/>
        <end position="129"/>
    </location>
</feature>
<feature type="compositionally biased region" description="Basic and acidic residues" evidence="2">
    <location>
        <begin position="138"/>
        <end position="150"/>
    </location>
</feature>
<keyword id="KW-0131">Cell cycle</keyword>
<keyword id="KW-0132">Cell division</keyword>
<keyword id="KW-0717">Septation</keyword>
<gene>
    <name evidence="1" type="primary">minC</name>
    <name type="ordered locus">PLES_18241</name>
</gene>